<organism>
    <name type="scientific">Pseudomonas entomophila (strain L48)</name>
    <dbReference type="NCBI Taxonomy" id="384676"/>
    <lineage>
        <taxon>Bacteria</taxon>
        <taxon>Pseudomonadati</taxon>
        <taxon>Pseudomonadota</taxon>
        <taxon>Gammaproteobacteria</taxon>
        <taxon>Pseudomonadales</taxon>
        <taxon>Pseudomonadaceae</taxon>
        <taxon>Pseudomonas</taxon>
    </lineage>
</organism>
<dbReference type="EC" id="3.5.1.5" evidence="1"/>
<dbReference type="EMBL" id="CT573326">
    <property type="protein sequence ID" value="CAK14924.1"/>
    <property type="molecule type" value="Genomic_DNA"/>
</dbReference>
<dbReference type="RefSeq" id="WP_011533327.1">
    <property type="nucleotide sequence ID" value="NC_008027.1"/>
</dbReference>
<dbReference type="SMR" id="Q1IBP1"/>
<dbReference type="STRING" id="384676.PSEEN2095"/>
<dbReference type="GeneID" id="32805303"/>
<dbReference type="KEGG" id="pen:PSEEN2095"/>
<dbReference type="eggNOG" id="COG0832">
    <property type="taxonomic scope" value="Bacteria"/>
</dbReference>
<dbReference type="HOGENOM" id="CLU_129707_1_1_6"/>
<dbReference type="OrthoDB" id="9797217at2"/>
<dbReference type="UniPathway" id="UPA00258">
    <property type="reaction ID" value="UER00370"/>
</dbReference>
<dbReference type="Proteomes" id="UP000000658">
    <property type="component" value="Chromosome"/>
</dbReference>
<dbReference type="GO" id="GO:0035550">
    <property type="term" value="C:urease complex"/>
    <property type="evidence" value="ECO:0007669"/>
    <property type="project" value="InterPro"/>
</dbReference>
<dbReference type="GO" id="GO:0009039">
    <property type="term" value="F:urease activity"/>
    <property type="evidence" value="ECO:0007669"/>
    <property type="project" value="UniProtKB-UniRule"/>
</dbReference>
<dbReference type="GO" id="GO:0043419">
    <property type="term" value="P:urea catabolic process"/>
    <property type="evidence" value="ECO:0007669"/>
    <property type="project" value="UniProtKB-UniRule"/>
</dbReference>
<dbReference type="CDD" id="cd00407">
    <property type="entry name" value="Urease_beta"/>
    <property type="match status" value="1"/>
</dbReference>
<dbReference type="FunFam" id="2.10.150.10:FF:000001">
    <property type="entry name" value="Urease subunit beta"/>
    <property type="match status" value="1"/>
</dbReference>
<dbReference type="Gene3D" id="2.10.150.10">
    <property type="entry name" value="Urease, beta subunit"/>
    <property type="match status" value="1"/>
</dbReference>
<dbReference type="HAMAP" id="MF_01954">
    <property type="entry name" value="Urease_beta"/>
    <property type="match status" value="1"/>
</dbReference>
<dbReference type="InterPro" id="IPR002019">
    <property type="entry name" value="Urease_beta-like"/>
</dbReference>
<dbReference type="InterPro" id="IPR036461">
    <property type="entry name" value="Urease_betasu_sf"/>
</dbReference>
<dbReference type="InterPro" id="IPR050069">
    <property type="entry name" value="Urease_subunit"/>
</dbReference>
<dbReference type="NCBIfam" id="NF009682">
    <property type="entry name" value="PRK13203.1"/>
    <property type="match status" value="1"/>
</dbReference>
<dbReference type="NCBIfam" id="TIGR00192">
    <property type="entry name" value="urease_beta"/>
    <property type="match status" value="1"/>
</dbReference>
<dbReference type="PANTHER" id="PTHR33569">
    <property type="entry name" value="UREASE"/>
    <property type="match status" value="1"/>
</dbReference>
<dbReference type="PANTHER" id="PTHR33569:SF1">
    <property type="entry name" value="UREASE"/>
    <property type="match status" value="1"/>
</dbReference>
<dbReference type="Pfam" id="PF00699">
    <property type="entry name" value="Urease_beta"/>
    <property type="match status" value="1"/>
</dbReference>
<dbReference type="SUPFAM" id="SSF51278">
    <property type="entry name" value="Urease, beta-subunit"/>
    <property type="match status" value="1"/>
</dbReference>
<name>URE2_PSEE4</name>
<proteinExistence type="inferred from homology"/>
<feature type="chain" id="PRO_1000070760" description="Urease subunit beta">
    <location>
        <begin position="1"/>
        <end position="105"/>
    </location>
</feature>
<reference key="1">
    <citation type="journal article" date="2006" name="Nat. Biotechnol.">
        <title>Complete genome sequence of the entomopathogenic and metabolically versatile soil bacterium Pseudomonas entomophila.</title>
        <authorList>
            <person name="Vodovar N."/>
            <person name="Vallenet D."/>
            <person name="Cruveiller S."/>
            <person name="Rouy Z."/>
            <person name="Barbe V."/>
            <person name="Acosta C."/>
            <person name="Cattolico L."/>
            <person name="Jubin C."/>
            <person name="Lajus A."/>
            <person name="Segurens B."/>
            <person name="Vacherie B."/>
            <person name="Wincker P."/>
            <person name="Weissenbach J."/>
            <person name="Lemaitre B."/>
            <person name="Medigue C."/>
            <person name="Boccard F."/>
        </authorList>
    </citation>
    <scope>NUCLEOTIDE SEQUENCE [LARGE SCALE GENOMIC DNA]</scope>
    <source>
        <strain>L48</strain>
    </source>
</reference>
<gene>
    <name evidence="1" type="primary">ureB</name>
    <name type="ordered locus">PSEEN2095</name>
</gene>
<sequence>MIPGEVQVAAGDIELNVGRETLSVSVANHGDRPVQVGSHYHFFEANDALVFERAPTRGYRLDIPAGTAVRFEPGQARTVQLVAYAGKREVYGFQGKVMGALEGRA</sequence>
<accession>Q1IBP1</accession>
<protein>
    <recommendedName>
        <fullName evidence="1">Urease subunit beta</fullName>
        <ecNumber evidence="1">3.5.1.5</ecNumber>
    </recommendedName>
    <alternativeName>
        <fullName evidence="1">Urea amidohydrolase subunit beta</fullName>
    </alternativeName>
</protein>
<comment type="catalytic activity">
    <reaction evidence="1">
        <text>urea + 2 H2O + H(+) = hydrogencarbonate + 2 NH4(+)</text>
        <dbReference type="Rhea" id="RHEA:20557"/>
        <dbReference type="ChEBI" id="CHEBI:15377"/>
        <dbReference type="ChEBI" id="CHEBI:15378"/>
        <dbReference type="ChEBI" id="CHEBI:16199"/>
        <dbReference type="ChEBI" id="CHEBI:17544"/>
        <dbReference type="ChEBI" id="CHEBI:28938"/>
        <dbReference type="EC" id="3.5.1.5"/>
    </reaction>
</comment>
<comment type="pathway">
    <text evidence="1">Nitrogen metabolism; urea degradation; CO(2) and NH(3) from urea (urease route): step 1/1.</text>
</comment>
<comment type="subunit">
    <text evidence="1">Heterotrimer of UreA (gamma), UreB (beta) and UreC (alpha) subunits. Three heterotrimers associate to form the active enzyme.</text>
</comment>
<comment type="subcellular location">
    <subcellularLocation>
        <location evidence="1">Cytoplasm</location>
    </subcellularLocation>
</comment>
<comment type="similarity">
    <text evidence="1">Belongs to the urease beta subunit family.</text>
</comment>
<evidence type="ECO:0000255" key="1">
    <source>
        <dbReference type="HAMAP-Rule" id="MF_01954"/>
    </source>
</evidence>
<keyword id="KW-0963">Cytoplasm</keyword>
<keyword id="KW-0378">Hydrolase</keyword>